<keyword id="KW-0216">Detoxification</keyword>
<keyword id="KW-0274">FAD</keyword>
<keyword id="KW-0285">Flavoprotein</keyword>
<keyword id="KW-0349">Heme</keyword>
<keyword id="KW-0408">Iron</keyword>
<keyword id="KW-0479">Metal-binding</keyword>
<keyword id="KW-0520">NAD</keyword>
<keyword id="KW-0521">NADP</keyword>
<keyword id="KW-0560">Oxidoreductase</keyword>
<keyword id="KW-0561">Oxygen transport</keyword>
<keyword id="KW-1185">Reference proteome</keyword>
<keyword id="KW-0813">Transport</keyword>
<accession>P26353</accession>
<comment type="function">
    <text evidence="3 4">Is involved in NO detoxification in an aerobic process, termed nitric oxide dioxygenase (NOD) reaction that utilizes O(2) and NAD(P)H to convert NO to nitrate, which protects the bacterium from various noxious nitrogen compounds. Therefore, plays a central role in the inducible response to nitrosative stress.</text>
</comment>
<comment type="catalytic activity">
    <reaction>
        <text>2 nitric oxide + NADPH + 2 O2 = 2 nitrate + NADP(+) + H(+)</text>
        <dbReference type="Rhea" id="RHEA:19465"/>
        <dbReference type="ChEBI" id="CHEBI:15378"/>
        <dbReference type="ChEBI" id="CHEBI:15379"/>
        <dbReference type="ChEBI" id="CHEBI:16480"/>
        <dbReference type="ChEBI" id="CHEBI:17632"/>
        <dbReference type="ChEBI" id="CHEBI:57783"/>
        <dbReference type="ChEBI" id="CHEBI:58349"/>
        <dbReference type="EC" id="1.14.12.17"/>
    </reaction>
</comment>
<comment type="catalytic activity">
    <reaction>
        <text>2 nitric oxide + NADH + 2 O2 = 2 nitrate + NAD(+) + H(+)</text>
        <dbReference type="Rhea" id="RHEA:19469"/>
        <dbReference type="ChEBI" id="CHEBI:15378"/>
        <dbReference type="ChEBI" id="CHEBI:15379"/>
        <dbReference type="ChEBI" id="CHEBI:16480"/>
        <dbReference type="ChEBI" id="CHEBI:17632"/>
        <dbReference type="ChEBI" id="CHEBI:57540"/>
        <dbReference type="ChEBI" id="CHEBI:57945"/>
        <dbReference type="EC" id="1.14.12.17"/>
    </reaction>
</comment>
<comment type="cofactor">
    <cofactor evidence="1">
        <name>heme b</name>
        <dbReference type="ChEBI" id="CHEBI:60344"/>
    </cofactor>
    <text evidence="1">Binds 1 heme b (iron(II)-protoporphyrin IX) group per subunit.</text>
</comment>
<comment type="cofactor">
    <cofactor evidence="1">
        <name>FAD</name>
        <dbReference type="ChEBI" id="CHEBI:57692"/>
    </cofactor>
    <text evidence="1">Binds 1 FAD per subunit.</text>
</comment>
<comment type="subunit">
    <text>Monomer.</text>
</comment>
<comment type="induction">
    <text evidence="5">By nitric oxide.</text>
</comment>
<comment type="domain">
    <text>Consists of two distinct domains; an N-terminal heme-containing oxygen-binding domain and a C-terminal reductase domain with binding sites for FAD and NAD(P)H.</text>
</comment>
<comment type="similarity">
    <text evidence="6">Belongs to the globin family. Two-domain flavohemoproteins subfamily.</text>
</comment>
<comment type="similarity">
    <text evidence="6">In the C-terminal section; belongs to the flavoprotein pyridine nucleotide cytochrome reductase family.</text>
</comment>
<organism>
    <name type="scientific">Salmonella typhimurium (strain LT2 / SGSC1412 / ATCC 700720)</name>
    <dbReference type="NCBI Taxonomy" id="99287"/>
    <lineage>
        <taxon>Bacteria</taxon>
        <taxon>Pseudomonadati</taxon>
        <taxon>Pseudomonadota</taxon>
        <taxon>Gammaproteobacteria</taxon>
        <taxon>Enterobacterales</taxon>
        <taxon>Enterobacteriaceae</taxon>
        <taxon>Salmonella</taxon>
    </lineage>
</organism>
<gene>
    <name type="primary">hmp</name>
    <name type="synonym">frsB</name>
    <name type="synonym">hmpA</name>
    <name type="ordered locus">STM2556</name>
</gene>
<protein>
    <recommendedName>
        <fullName>Flavohemoprotein</fullName>
    </recommendedName>
    <alternativeName>
        <fullName>Flavohemoglobin</fullName>
    </alternativeName>
    <alternativeName>
        <fullName>Hemoglobin-like protein</fullName>
    </alternativeName>
    <alternativeName>
        <fullName>Nitric oxide dioxygenase</fullName>
        <shortName>NO oxygenase</shortName>
        <shortName>NOD</shortName>
        <ecNumber>1.14.12.17</ecNumber>
    </alternativeName>
</protein>
<feature type="chain" id="PRO_0000052447" description="Flavohemoprotein">
    <location>
        <begin position="1"/>
        <end position="396"/>
    </location>
</feature>
<feature type="domain" description="Globin" evidence="2">
    <location>
        <begin position="1"/>
        <end position="136"/>
    </location>
</feature>
<feature type="domain" description="FAD-binding FR-type">
    <location>
        <begin position="150"/>
        <end position="255"/>
    </location>
</feature>
<feature type="region of interest" description="Reductase">
    <location>
        <begin position="147"/>
        <end position="396"/>
    </location>
</feature>
<feature type="active site" description="Charge relay system" evidence="1">
    <location>
        <position position="95"/>
    </location>
</feature>
<feature type="active site" description="Charge relay system" evidence="1">
    <location>
        <position position="135"/>
    </location>
</feature>
<feature type="binding site" description="proximal binding residue" evidence="1">
    <location>
        <position position="85"/>
    </location>
    <ligand>
        <name>heme b</name>
        <dbReference type="ChEBI" id="CHEBI:60344"/>
    </ligand>
    <ligandPart>
        <name>Fe</name>
        <dbReference type="ChEBI" id="CHEBI:18248"/>
    </ligandPart>
</feature>
<feature type="binding site" evidence="1">
    <location>
        <position position="188"/>
    </location>
    <ligand>
        <name>FAD</name>
        <dbReference type="ChEBI" id="CHEBI:57692"/>
    </ligand>
</feature>
<feature type="binding site" evidence="1">
    <location>
        <begin position="204"/>
        <end position="207"/>
    </location>
    <ligand>
        <name>FAD</name>
        <dbReference type="ChEBI" id="CHEBI:57692"/>
    </ligand>
</feature>
<feature type="binding site" evidence="1">
    <location>
        <begin position="268"/>
        <end position="273"/>
    </location>
    <ligand>
        <name>NADP(+)</name>
        <dbReference type="ChEBI" id="CHEBI:58349"/>
    </ligand>
</feature>
<feature type="binding site" evidence="1">
    <location>
        <begin position="389"/>
        <end position="392"/>
    </location>
    <ligand>
        <name>FAD</name>
        <dbReference type="ChEBI" id="CHEBI:57692"/>
    </ligand>
</feature>
<feature type="site" description="Involved in heme-bound ligand stabilization and O-O bond activation" evidence="1">
    <location>
        <position position="29"/>
    </location>
</feature>
<feature type="site" description="Influences the redox potential of the prosthetic heme and FAD groups" evidence="1">
    <location>
        <position position="84"/>
    </location>
</feature>
<feature type="site" description="Influences the redox potential of the prosthetic heme and FAD groups" evidence="1">
    <location>
        <position position="388"/>
    </location>
</feature>
<feature type="sequence conflict" description="In Ref. 1; AAC24484." evidence="6" ref="1">
    <original>EI</original>
    <variation>VF</variation>
    <location>
        <begin position="202"/>
        <end position="203"/>
    </location>
</feature>
<feature type="sequence conflict" description="In Ref. 1; AAC24484." evidence="6" ref="1">
    <original>G</original>
    <variation>V</variation>
    <location>
        <position position="242"/>
    </location>
</feature>
<feature type="sequence conflict" description="In Ref. 1; AAC24484." evidence="6" ref="1">
    <original>S</original>
    <variation>A</variation>
    <location>
        <position position="330"/>
    </location>
</feature>
<proteinExistence type="evidence at transcript level"/>
<dbReference type="EC" id="1.14.12.17"/>
<dbReference type="EMBL" id="AF020388">
    <property type="protein sequence ID" value="AAC24484.1"/>
    <property type="molecule type" value="Genomic_DNA"/>
</dbReference>
<dbReference type="EMBL" id="AE006468">
    <property type="protein sequence ID" value="AAL21450.1"/>
    <property type="molecule type" value="Genomic_DNA"/>
</dbReference>
<dbReference type="EMBL" id="X15816">
    <property type="status" value="NOT_ANNOTATED_CDS"/>
    <property type="molecule type" value="Genomic_DNA"/>
</dbReference>
<dbReference type="PIR" id="A48427">
    <property type="entry name" value="A48427"/>
</dbReference>
<dbReference type="RefSeq" id="NP_461491.1">
    <property type="nucleotide sequence ID" value="NC_003197.2"/>
</dbReference>
<dbReference type="RefSeq" id="WP_000883144.1">
    <property type="nucleotide sequence ID" value="NC_003197.2"/>
</dbReference>
<dbReference type="SMR" id="P26353"/>
<dbReference type="STRING" id="99287.STM2556"/>
<dbReference type="PaxDb" id="99287-STM2556"/>
<dbReference type="GeneID" id="1254078"/>
<dbReference type="KEGG" id="stm:STM2556"/>
<dbReference type="PATRIC" id="fig|99287.12.peg.2697"/>
<dbReference type="HOGENOM" id="CLU_003827_12_0_6"/>
<dbReference type="PhylomeDB" id="P26353"/>
<dbReference type="BioCyc" id="SENT99287:STM2556-MONOMER"/>
<dbReference type="Proteomes" id="UP000001014">
    <property type="component" value="Chromosome"/>
</dbReference>
<dbReference type="GO" id="GO:0005737">
    <property type="term" value="C:cytoplasm"/>
    <property type="evidence" value="ECO:0000318"/>
    <property type="project" value="GO_Central"/>
</dbReference>
<dbReference type="GO" id="GO:0071949">
    <property type="term" value="F:FAD binding"/>
    <property type="evidence" value="ECO:0000318"/>
    <property type="project" value="GO_Central"/>
</dbReference>
<dbReference type="GO" id="GO:0020037">
    <property type="term" value="F:heme binding"/>
    <property type="evidence" value="ECO:0007669"/>
    <property type="project" value="InterPro"/>
</dbReference>
<dbReference type="GO" id="GO:0046872">
    <property type="term" value="F:metal ion binding"/>
    <property type="evidence" value="ECO:0007669"/>
    <property type="project" value="UniProtKB-KW"/>
</dbReference>
<dbReference type="GO" id="GO:0008941">
    <property type="term" value="F:nitric oxide dioxygenase NAD(P)H activity"/>
    <property type="evidence" value="ECO:0000318"/>
    <property type="project" value="GO_Central"/>
</dbReference>
<dbReference type="GO" id="GO:0019825">
    <property type="term" value="F:oxygen binding"/>
    <property type="evidence" value="ECO:0007669"/>
    <property type="project" value="InterPro"/>
</dbReference>
<dbReference type="GO" id="GO:0005344">
    <property type="term" value="F:oxygen carrier activity"/>
    <property type="evidence" value="ECO:0007669"/>
    <property type="project" value="UniProtKB-UniRule"/>
</dbReference>
<dbReference type="GO" id="GO:0071500">
    <property type="term" value="P:cellular response to nitrosative stress"/>
    <property type="evidence" value="ECO:0000318"/>
    <property type="project" value="GO_Central"/>
</dbReference>
<dbReference type="GO" id="GO:0046210">
    <property type="term" value="P:nitric oxide catabolic process"/>
    <property type="evidence" value="ECO:0000318"/>
    <property type="project" value="GO_Central"/>
</dbReference>
<dbReference type="GO" id="GO:0009636">
    <property type="term" value="P:response to toxic substance"/>
    <property type="evidence" value="ECO:0007669"/>
    <property type="project" value="UniProtKB-KW"/>
</dbReference>
<dbReference type="CDD" id="cd06184">
    <property type="entry name" value="flavohem_like_fad_nad_binding"/>
    <property type="match status" value="1"/>
</dbReference>
<dbReference type="CDD" id="cd14776">
    <property type="entry name" value="HmpEc-globin-like"/>
    <property type="match status" value="1"/>
</dbReference>
<dbReference type="FunFam" id="1.10.490.10:FF:000003">
    <property type="entry name" value="Flavohemoprotein"/>
    <property type="match status" value="1"/>
</dbReference>
<dbReference type="FunFam" id="2.40.30.10:FF:000034">
    <property type="entry name" value="Flavohemoprotein"/>
    <property type="match status" value="1"/>
</dbReference>
<dbReference type="FunFam" id="3.40.50.80:FF:000010">
    <property type="entry name" value="Flavohemoprotein"/>
    <property type="match status" value="1"/>
</dbReference>
<dbReference type="Gene3D" id="1.10.490.10">
    <property type="entry name" value="Globins"/>
    <property type="match status" value="1"/>
</dbReference>
<dbReference type="Gene3D" id="3.40.50.80">
    <property type="entry name" value="Nucleotide-binding domain of ferredoxin-NADP reductase (FNR) module"/>
    <property type="match status" value="1"/>
</dbReference>
<dbReference type="Gene3D" id="2.40.30.10">
    <property type="entry name" value="Translation factors"/>
    <property type="match status" value="1"/>
</dbReference>
<dbReference type="HAMAP" id="MF_01252">
    <property type="entry name" value="Hmp"/>
    <property type="match status" value="1"/>
</dbReference>
<dbReference type="InterPro" id="IPR008333">
    <property type="entry name" value="Cbr1-like_FAD-bd_dom"/>
</dbReference>
<dbReference type="InterPro" id="IPR017927">
    <property type="entry name" value="FAD-bd_FR_type"/>
</dbReference>
<dbReference type="InterPro" id="IPR039261">
    <property type="entry name" value="FNR_nucleotide-bd"/>
</dbReference>
<dbReference type="InterPro" id="IPR000971">
    <property type="entry name" value="Globin"/>
</dbReference>
<dbReference type="InterPro" id="IPR009050">
    <property type="entry name" value="Globin-like_sf"/>
</dbReference>
<dbReference type="InterPro" id="IPR012292">
    <property type="entry name" value="Globin/Proto"/>
</dbReference>
<dbReference type="InterPro" id="IPR023950">
    <property type="entry name" value="Hmp"/>
</dbReference>
<dbReference type="InterPro" id="IPR001433">
    <property type="entry name" value="OxRdtase_FAD/NAD-bd"/>
</dbReference>
<dbReference type="InterPro" id="IPR017938">
    <property type="entry name" value="Riboflavin_synthase-like_b-brl"/>
</dbReference>
<dbReference type="NCBIfam" id="NF009805">
    <property type="entry name" value="PRK13289.1"/>
    <property type="match status" value="1"/>
</dbReference>
<dbReference type="PANTHER" id="PTHR43396">
    <property type="entry name" value="FLAVOHEMOPROTEIN"/>
    <property type="match status" value="1"/>
</dbReference>
<dbReference type="PANTHER" id="PTHR43396:SF3">
    <property type="entry name" value="FLAVOHEMOPROTEIN"/>
    <property type="match status" value="1"/>
</dbReference>
<dbReference type="Pfam" id="PF00970">
    <property type="entry name" value="FAD_binding_6"/>
    <property type="match status" value="1"/>
</dbReference>
<dbReference type="Pfam" id="PF00042">
    <property type="entry name" value="Globin"/>
    <property type="match status" value="1"/>
</dbReference>
<dbReference type="Pfam" id="PF00175">
    <property type="entry name" value="NAD_binding_1"/>
    <property type="match status" value="1"/>
</dbReference>
<dbReference type="PRINTS" id="PR00410">
    <property type="entry name" value="PHEHYDRXLASE"/>
</dbReference>
<dbReference type="SUPFAM" id="SSF52343">
    <property type="entry name" value="Ferredoxin reductase-like, C-terminal NADP-linked domain"/>
    <property type="match status" value="1"/>
</dbReference>
<dbReference type="SUPFAM" id="SSF46458">
    <property type="entry name" value="Globin-like"/>
    <property type="match status" value="1"/>
</dbReference>
<dbReference type="SUPFAM" id="SSF63380">
    <property type="entry name" value="Riboflavin synthase domain-like"/>
    <property type="match status" value="1"/>
</dbReference>
<dbReference type="PROSITE" id="PS51384">
    <property type="entry name" value="FAD_FR"/>
    <property type="match status" value="1"/>
</dbReference>
<dbReference type="PROSITE" id="PS01033">
    <property type="entry name" value="GLOBIN"/>
    <property type="match status" value="1"/>
</dbReference>
<sequence length="396" mass="43992">MLDAQTIATVKATIPLLVETGPKLTAHFYDRMFTHNPELKEIFNMSNQRNGDQREALFNAIAAYASNIENLPALLPAVEKIAQKHTSFQIKPEQYNIVGTHLLATLDEMFNPGQEVLDAWGKAYGVLANVFIHREAEIYHENASKDGGWEGTRPFRIVAKTPRSALITSFEFEPVDGGTVAEYRPGQYLGVWLKPEGFAHQEIRQYSLTRKPDGKGYRIAVKREDGGQVSNWLHHHASVGDGVHLAAPAGDFFMNVAADTPVSLISAGVGQTPMLAMLDTLAKEQHTAQVNWFHAAENGDVHAFADEVSELGRTLPRFTAHTWYREPTESDRAQRLFDSEGLMDLSKLEAAISDPAMQFYLCGPVGFMQFAAKQLVSLGVNNENIHYECFGPHKVL</sequence>
<name>HMP_SALTY</name>
<evidence type="ECO:0000250" key="1"/>
<evidence type="ECO:0000255" key="2">
    <source>
        <dbReference type="PROSITE-ProRule" id="PRU00238"/>
    </source>
</evidence>
<evidence type="ECO:0000269" key="3">
    <source>
    </source>
</evidence>
<evidence type="ECO:0000269" key="4">
    <source>
    </source>
</evidence>
<evidence type="ECO:0000269" key="5">
    <source>
    </source>
</evidence>
<evidence type="ECO:0000305" key="6"/>
<reference key="1">
    <citation type="journal article" date="1998" name="J. Biol. Chem.">
        <title>Role for the Salmonella flavohemoglobin in protection from nitric oxide.</title>
        <authorList>
            <person name="Crawford M.J."/>
            <person name="Goldberg D.E."/>
        </authorList>
    </citation>
    <scope>NUCLEOTIDE SEQUENCE [GENOMIC DNA]</scope>
    <scope>ROLE IN RESISTANCE TO NITRIC OXIDE</scope>
    <source>
        <strain>ATCC 14028 / SGSG 2980 / CDC 6516-60 / NCTC 12023</strain>
    </source>
</reference>
<reference key="2">
    <citation type="journal article" date="2001" name="Nature">
        <title>Complete genome sequence of Salmonella enterica serovar Typhimurium LT2.</title>
        <authorList>
            <person name="McClelland M."/>
            <person name="Sanderson K.E."/>
            <person name="Spieth J."/>
            <person name="Clifton S.W."/>
            <person name="Latreille P."/>
            <person name="Courtney L."/>
            <person name="Porwollik S."/>
            <person name="Ali J."/>
            <person name="Dante M."/>
            <person name="Du F."/>
            <person name="Hou S."/>
            <person name="Layman D."/>
            <person name="Leonard S."/>
            <person name="Nguyen C."/>
            <person name="Scott K."/>
            <person name="Holmes A."/>
            <person name="Grewal N."/>
            <person name="Mulvaney E."/>
            <person name="Ryan E."/>
            <person name="Sun H."/>
            <person name="Florea L."/>
            <person name="Miller W."/>
            <person name="Stoneking T."/>
            <person name="Nhan M."/>
            <person name="Waterston R."/>
            <person name="Wilson R.K."/>
        </authorList>
    </citation>
    <scope>NUCLEOTIDE SEQUENCE [LARGE SCALE GENOMIC DNA]</scope>
    <source>
        <strain>LT2 / SGSC1412 / ATCC 700720</strain>
    </source>
</reference>
<reference key="3">
    <citation type="journal article" date="1990" name="DNA Seq.">
        <title>Nucleotide sequence of the Salmonella typhimurium glyA gene.</title>
        <authorList>
            <person name="Steiert J.G."/>
            <person name="Urbanowski M.L."/>
            <person name="Stauffer L.T."/>
            <person name="Plamann M.D."/>
            <person name="Stauffer G.V."/>
        </authorList>
    </citation>
    <scope>NUCLEOTIDE SEQUENCE [GENOMIC DNA] OF 1-29</scope>
    <source>
        <strain>LT2</strain>
    </source>
</reference>
<reference key="4">
    <citation type="journal article" date="1998" name="J. Biol. Chem.">
        <title>Regulation of the Salmonella typhimurium flavohemoglobin gene. A new pathway for bacterial gene expression in response to nitric oxide.</title>
        <authorList>
            <person name="Crawford M.J."/>
            <person name="Goldberg D.E."/>
        </authorList>
    </citation>
    <scope>INDUCTION</scope>
</reference>
<reference key="5">
    <citation type="journal article" date="2002" name="Infect. Immun.">
        <title>Flavohemoglobin Hmp protects Salmonella enterica serovar typhimurium from nitric oxide-related killing by human macrophages.</title>
        <authorList>
            <person name="Stevanin T.M."/>
            <person name="Poole R.K."/>
            <person name="Demoncheaux E.A.G."/>
            <person name="Read R.C."/>
        </authorList>
    </citation>
    <scope>ROLE IN NITRIC OXIDE DETOXIFICATION</scope>
</reference>